<comment type="function">
    <text evidence="1">Catalyzes the reversible transfer of the terminal phosphate of ATP to form a long-chain polyphosphate (polyP).</text>
</comment>
<comment type="catalytic activity">
    <reaction evidence="1">
        <text>[phosphate](n) + ATP = [phosphate](n+1) + ADP</text>
        <dbReference type="Rhea" id="RHEA:19573"/>
        <dbReference type="Rhea" id="RHEA-COMP:9859"/>
        <dbReference type="Rhea" id="RHEA-COMP:14280"/>
        <dbReference type="ChEBI" id="CHEBI:16838"/>
        <dbReference type="ChEBI" id="CHEBI:30616"/>
        <dbReference type="ChEBI" id="CHEBI:456216"/>
        <dbReference type="EC" id="2.7.4.1"/>
    </reaction>
</comment>
<comment type="cofactor">
    <cofactor evidence="1">
        <name>Mg(2+)</name>
        <dbReference type="ChEBI" id="CHEBI:18420"/>
    </cofactor>
</comment>
<comment type="PTM">
    <text evidence="1">An intermediate of this reaction is the autophosphorylated ppk in which a phosphate is covalently linked to a histidine residue through a N-P bond.</text>
</comment>
<comment type="similarity">
    <text evidence="1">Belongs to the polyphosphate kinase 1 (PPK1) family.</text>
</comment>
<evidence type="ECO:0000255" key="1">
    <source>
        <dbReference type="HAMAP-Rule" id="MF_00347"/>
    </source>
</evidence>
<evidence type="ECO:0000256" key="2">
    <source>
        <dbReference type="SAM" id="MobiDB-lite"/>
    </source>
</evidence>
<dbReference type="EC" id="2.7.4.1" evidence="1"/>
<dbReference type="EMBL" id="CP001096">
    <property type="protein sequence ID" value="ACF01959.1"/>
    <property type="molecule type" value="Genomic_DNA"/>
</dbReference>
<dbReference type="RefSeq" id="WP_012496515.1">
    <property type="nucleotide sequence ID" value="NC_011004.1"/>
</dbReference>
<dbReference type="SMR" id="B3Q9Q6"/>
<dbReference type="KEGG" id="rpt:Rpal_3458"/>
<dbReference type="HOGENOM" id="CLU_009678_5_0_5"/>
<dbReference type="OrthoDB" id="9761456at2"/>
<dbReference type="Proteomes" id="UP000001725">
    <property type="component" value="Chromosome"/>
</dbReference>
<dbReference type="GO" id="GO:0009358">
    <property type="term" value="C:polyphosphate kinase complex"/>
    <property type="evidence" value="ECO:0007669"/>
    <property type="project" value="InterPro"/>
</dbReference>
<dbReference type="GO" id="GO:0005524">
    <property type="term" value="F:ATP binding"/>
    <property type="evidence" value="ECO:0007669"/>
    <property type="project" value="UniProtKB-KW"/>
</dbReference>
<dbReference type="GO" id="GO:0046872">
    <property type="term" value="F:metal ion binding"/>
    <property type="evidence" value="ECO:0007669"/>
    <property type="project" value="UniProtKB-KW"/>
</dbReference>
<dbReference type="GO" id="GO:0008976">
    <property type="term" value="F:polyphosphate kinase activity"/>
    <property type="evidence" value="ECO:0007669"/>
    <property type="project" value="UniProtKB-UniRule"/>
</dbReference>
<dbReference type="GO" id="GO:0006799">
    <property type="term" value="P:polyphosphate biosynthetic process"/>
    <property type="evidence" value="ECO:0007669"/>
    <property type="project" value="UniProtKB-UniRule"/>
</dbReference>
<dbReference type="CDD" id="cd09165">
    <property type="entry name" value="PLDc_PaPPK1_C1_like"/>
    <property type="match status" value="1"/>
</dbReference>
<dbReference type="CDD" id="cd09168">
    <property type="entry name" value="PLDc_PaPPK1_C2_like"/>
    <property type="match status" value="1"/>
</dbReference>
<dbReference type="Gene3D" id="3.30.870.10">
    <property type="entry name" value="Endonuclease Chain A"/>
    <property type="match status" value="2"/>
</dbReference>
<dbReference type="Gene3D" id="3.30.1840.10">
    <property type="entry name" value="Polyphosphate kinase middle domain"/>
    <property type="match status" value="1"/>
</dbReference>
<dbReference type="Gene3D" id="1.20.58.310">
    <property type="entry name" value="Polyphosphate kinase N-terminal domain"/>
    <property type="match status" value="1"/>
</dbReference>
<dbReference type="HAMAP" id="MF_00347">
    <property type="entry name" value="Polyphosphate_kinase"/>
    <property type="match status" value="1"/>
</dbReference>
<dbReference type="InterPro" id="IPR003414">
    <property type="entry name" value="PP_kinase"/>
</dbReference>
<dbReference type="InterPro" id="IPR041108">
    <property type="entry name" value="PP_kinase_C_1"/>
</dbReference>
<dbReference type="InterPro" id="IPR024953">
    <property type="entry name" value="PP_kinase_middle"/>
</dbReference>
<dbReference type="InterPro" id="IPR036830">
    <property type="entry name" value="PP_kinase_middle_dom_sf"/>
</dbReference>
<dbReference type="InterPro" id="IPR025200">
    <property type="entry name" value="PPK_C_dom2"/>
</dbReference>
<dbReference type="InterPro" id="IPR025198">
    <property type="entry name" value="PPK_N_dom"/>
</dbReference>
<dbReference type="InterPro" id="IPR036832">
    <property type="entry name" value="PPK_N_dom_sf"/>
</dbReference>
<dbReference type="NCBIfam" id="TIGR03705">
    <property type="entry name" value="poly_P_kin"/>
    <property type="match status" value="1"/>
</dbReference>
<dbReference type="NCBIfam" id="NF003917">
    <property type="entry name" value="PRK05443.1-1"/>
    <property type="match status" value="1"/>
</dbReference>
<dbReference type="NCBIfam" id="NF003918">
    <property type="entry name" value="PRK05443.1-2"/>
    <property type="match status" value="1"/>
</dbReference>
<dbReference type="NCBIfam" id="NF003919">
    <property type="entry name" value="PRK05443.1-4"/>
    <property type="match status" value="1"/>
</dbReference>
<dbReference type="NCBIfam" id="NF003921">
    <property type="entry name" value="PRK05443.2-2"/>
    <property type="match status" value="1"/>
</dbReference>
<dbReference type="PANTHER" id="PTHR30218">
    <property type="entry name" value="POLYPHOSPHATE KINASE"/>
    <property type="match status" value="1"/>
</dbReference>
<dbReference type="PANTHER" id="PTHR30218:SF0">
    <property type="entry name" value="POLYPHOSPHATE KINASE"/>
    <property type="match status" value="1"/>
</dbReference>
<dbReference type="Pfam" id="PF02503">
    <property type="entry name" value="PP_kinase"/>
    <property type="match status" value="1"/>
</dbReference>
<dbReference type="Pfam" id="PF13090">
    <property type="entry name" value="PP_kinase_C"/>
    <property type="match status" value="1"/>
</dbReference>
<dbReference type="Pfam" id="PF17941">
    <property type="entry name" value="PP_kinase_C_1"/>
    <property type="match status" value="1"/>
</dbReference>
<dbReference type="Pfam" id="PF13089">
    <property type="entry name" value="PP_kinase_N"/>
    <property type="match status" value="1"/>
</dbReference>
<dbReference type="PIRSF" id="PIRSF015589">
    <property type="entry name" value="PP_kinase"/>
    <property type="match status" value="1"/>
</dbReference>
<dbReference type="SUPFAM" id="SSF56024">
    <property type="entry name" value="Phospholipase D/nuclease"/>
    <property type="match status" value="2"/>
</dbReference>
<dbReference type="SUPFAM" id="SSF143724">
    <property type="entry name" value="PHP14-like"/>
    <property type="match status" value="1"/>
</dbReference>
<dbReference type="SUPFAM" id="SSF140356">
    <property type="entry name" value="PPK N-terminal domain-like"/>
    <property type="match status" value="1"/>
</dbReference>
<proteinExistence type="inferred from homology"/>
<gene>
    <name evidence="1" type="primary">ppk</name>
    <name type="ordered locus">Rpal_3458</name>
</gene>
<protein>
    <recommendedName>
        <fullName evidence="1">Polyphosphate kinase</fullName>
        <ecNumber evidence="1">2.7.4.1</ecNumber>
    </recommendedName>
    <alternativeName>
        <fullName evidence="1">ATP-polyphosphate phosphotransferase</fullName>
    </alternativeName>
    <alternativeName>
        <fullName evidence="1">Polyphosphoric acid kinase</fullName>
    </alternativeName>
</protein>
<feature type="chain" id="PRO_1000120507" description="Polyphosphate kinase">
    <location>
        <begin position="1"/>
        <end position="736"/>
    </location>
</feature>
<feature type="region of interest" description="Disordered" evidence="2">
    <location>
        <begin position="703"/>
        <end position="736"/>
    </location>
</feature>
<feature type="active site" description="Phosphohistidine intermediate" evidence="1">
    <location>
        <position position="453"/>
    </location>
</feature>
<feature type="binding site" evidence="1">
    <location>
        <position position="67"/>
    </location>
    <ligand>
        <name>ATP</name>
        <dbReference type="ChEBI" id="CHEBI:30616"/>
    </ligand>
</feature>
<feature type="binding site" evidence="1">
    <location>
        <position position="393"/>
    </location>
    <ligand>
        <name>Mg(2+)</name>
        <dbReference type="ChEBI" id="CHEBI:18420"/>
    </ligand>
</feature>
<feature type="binding site" evidence="1">
    <location>
        <position position="423"/>
    </location>
    <ligand>
        <name>Mg(2+)</name>
        <dbReference type="ChEBI" id="CHEBI:18420"/>
    </ligand>
</feature>
<feature type="binding site" evidence="1">
    <location>
        <position position="486"/>
    </location>
    <ligand>
        <name>ATP</name>
        <dbReference type="ChEBI" id="CHEBI:30616"/>
    </ligand>
</feature>
<feature type="binding site" evidence="1">
    <location>
        <position position="582"/>
    </location>
    <ligand>
        <name>ATP</name>
        <dbReference type="ChEBI" id="CHEBI:30616"/>
    </ligand>
</feature>
<feature type="binding site" evidence="1">
    <location>
        <position position="610"/>
    </location>
    <ligand>
        <name>ATP</name>
        <dbReference type="ChEBI" id="CHEBI:30616"/>
    </ligand>
</feature>
<organism>
    <name type="scientific">Rhodopseudomonas palustris (strain TIE-1)</name>
    <dbReference type="NCBI Taxonomy" id="395960"/>
    <lineage>
        <taxon>Bacteria</taxon>
        <taxon>Pseudomonadati</taxon>
        <taxon>Pseudomonadota</taxon>
        <taxon>Alphaproteobacteria</taxon>
        <taxon>Hyphomicrobiales</taxon>
        <taxon>Nitrobacteraceae</taxon>
        <taxon>Rhodopseudomonas</taxon>
    </lineage>
</organism>
<reference key="1">
    <citation type="submission" date="2008-05" db="EMBL/GenBank/DDBJ databases">
        <title>Complete sequence of Rhodopseudomonas palustris TIE-1.</title>
        <authorList>
            <consortium name="US DOE Joint Genome Institute"/>
            <person name="Lucas S."/>
            <person name="Copeland A."/>
            <person name="Lapidus A."/>
            <person name="Glavina del Rio T."/>
            <person name="Dalin E."/>
            <person name="Tice H."/>
            <person name="Pitluck S."/>
            <person name="Chain P."/>
            <person name="Malfatti S."/>
            <person name="Shin M."/>
            <person name="Vergez L."/>
            <person name="Lang D."/>
            <person name="Schmutz J."/>
            <person name="Larimer F."/>
            <person name="Land M."/>
            <person name="Hauser L."/>
            <person name="Kyrpides N."/>
            <person name="Mikhailova N."/>
            <person name="Emerson D."/>
            <person name="Newman D.K."/>
            <person name="Roden E."/>
            <person name="Richardson P."/>
        </authorList>
    </citation>
    <scope>NUCLEOTIDE SEQUENCE [LARGE SCALE GENOMIC DNA]</scope>
    <source>
        <strain>TIE-1</strain>
    </source>
</reference>
<name>PPK1_RHOPT</name>
<sequence length="736" mass="82733">MDSEQVIAIEEKKGETEPASMIAAGPERFINRELSWLHFNRRVLEESVNPHHPVLERVRFLSISANNLDEFFMVRVAGIKAQIREGITERSPDGLTPSEQLGLINEAVSKLASDQQSIWRDLRGVLADSGILLLDGKDVTKAERAWIEDHFLHNIFPLLTPLAIDPAHPFPFIPSLGFTIGLQLARVSDGRPMNALIRMPARIDRFIRLPGNGRDQTVRVMTLEQATSLFIGRLFPGYHVKGQGSFRIIRDSELEIEEEAEDLVRLFETALKRRRRGSVIRMEVDSSMPEELRVFVQRALTAADDEVFLVDGVLAMNELSQLTRVDRPDLEFVPYVPRHPERVRDHGGDIFAAIRQKDLIVHHPYESFDVVVQFLQQAARDPDVVAIKQTLYRTSNNSPIVRALAEAAEAGKSVTALVELKARFDEEANIRWARDLERAGVQVVYGFLQLKTHAKLSLVVRREGGSLTTYIHTGTGNYHPVTARIYTDLSYFTSDPILGRDAARVFNYITGYAEPSDIEKMAVSPITLRKTMLEHIRGETAFAKHGKPAAIWLKMNALVDPEIIDALYEASRAGVSVELVVRGICCLRPGVPGLSDNIRVKSIIGRFLEHGRIYCFGNGYGLPSAKAAVYISSADMMPRNLDRRVEVLCPMLNPTVHQQVLEQIMVANLKDTEQSWRLLPDGSSTRMKAAKGEEPFNVHNYFMTNPSLSGRGKSLQESSPRRLTRRAERQQSQQSS</sequence>
<keyword id="KW-0067">ATP-binding</keyword>
<keyword id="KW-0418">Kinase</keyword>
<keyword id="KW-0460">Magnesium</keyword>
<keyword id="KW-0479">Metal-binding</keyword>
<keyword id="KW-0547">Nucleotide-binding</keyword>
<keyword id="KW-0597">Phosphoprotein</keyword>
<keyword id="KW-0808">Transferase</keyword>
<accession>B3Q9Q6</accession>